<reference key="1">
    <citation type="journal article" date="2009" name="PLoS Genet.">
        <title>Organised genome dynamics in the Escherichia coli species results in highly diverse adaptive paths.</title>
        <authorList>
            <person name="Touchon M."/>
            <person name="Hoede C."/>
            <person name="Tenaillon O."/>
            <person name="Barbe V."/>
            <person name="Baeriswyl S."/>
            <person name="Bidet P."/>
            <person name="Bingen E."/>
            <person name="Bonacorsi S."/>
            <person name="Bouchier C."/>
            <person name="Bouvet O."/>
            <person name="Calteau A."/>
            <person name="Chiapello H."/>
            <person name="Clermont O."/>
            <person name="Cruveiller S."/>
            <person name="Danchin A."/>
            <person name="Diard M."/>
            <person name="Dossat C."/>
            <person name="Karoui M.E."/>
            <person name="Frapy E."/>
            <person name="Garry L."/>
            <person name="Ghigo J.M."/>
            <person name="Gilles A.M."/>
            <person name="Johnson J."/>
            <person name="Le Bouguenec C."/>
            <person name="Lescat M."/>
            <person name="Mangenot S."/>
            <person name="Martinez-Jehanne V."/>
            <person name="Matic I."/>
            <person name="Nassif X."/>
            <person name="Oztas S."/>
            <person name="Petit M.A."/>
            <person name="Pichon C."/>
            <person name="Rouy Z."/>
            <person name="Ruf C.S."/>
            <person name="Schneider D."/>
            <person name="Tourret J."/>
            <person name="Vacherie B."/>
            <person name="Vallenet D."/>
            <person name="Medigue C."/>
            <person name="Rocha E.P.C."/>
            <person name="Denamur E."/>
        </authorList>
    </citation>
    <scope>NUCLEOTIDE SEQUENCE [LARGE SCALE GENOMIC DNA]</scope>
    <source>
        <strain>S88 / ExPEC</strain>
    </source>
</reference>
<keyword id="KW-0031">Aminopeptidase</keyword>
<keyword id="KW-0963">Cytoplasm</keyword>
<keyword id="KW-0378">Hydrolase</keyword>
<keyword id="KW-0464">Manganese</keyword>
<keyword id="KW-0479">Metal-binding</keyword>
<keyword id="KW-0645">Protease</keyword>
<keyword id="KW-1185">Reference proteome</keyword>
<protein>
    <recommendedName>
        <fullName evidence="1">Probable cytosol aminopeptidase</fullName>
        <ecNumber evidence="1">3.4.11.1</ecNumber>
    </recommendedName>
    <alternativeName>
        <fullName evidence="1">Leucine aminopeptidase</fullName>
        <shortName evidence="1">LAP</shortName>
        <ecNumber evidence="1">3.4.11.10</ecNumber>
    </alternativeName>
    <alternativeName>
        <fullName evidence="1">Leucyl aminopeptidase</fullName>
    </alternativeName>
</protein>
<accession>B7MLR5</accession>
<feature type="chain" id="PRO_1000118452" description="Probable cytosol aminopeptidase">
    <location>
        <begin position="1"/>
        <end position="503"/>
    </location>
</feature>
<feature type="active site" evidence="1">
    <location>
        <position position="282"/>
    </location>
</feature>
<feature type="active site" evidence="1">
    <location>
        <position position="356"/>
    </location>
</feature>
<feature type="binding site" evidence="1">
    <location>
        <position position="270"/>
    </location>
    <ligand>
        <name>Mn(2+)</name>
        <dbReference type="ChEBI" id="CHEBI:29035"/>
        <label>2</label>
    </ligand>
</feature>
<feature type="binding site" evidence="1">
    <location>
        <position position="275"/>
    </location>
    <ligand>
        <name>Mn(2+)</name>
        <dbReference type="ChEBI" id="CHEBI:29035"/>
        <label>1</label>
    </ligand>
</feature>
<feature type="binding site" evidence="1">
    <location>
        <position position="275"/>
    </location>
    <ligand>
        <name>Mn(2+)</name>
        <dbReference type="ChEBI" id="CHEBI:29035"/>
        <label>2</label>
    </ligand>
</feature>
<feature type="binding site" evidence="1">
    <location>
        <position position="293"/>
    </location>
    <ligand>
        <name>Mn(2+)</name>
        <dbReference type="ChEBI" id="CHEBI:29035"/>
        <label>2</label>
    </ligand>
</feature>
<feature type="binding site" evidence="1">
    <location>
        <position position="352"/>
    </location>
    <ligand>
        <name>Mn(2+)</name>
        <dbReference type="ChEBI" id="CHEBI:29035"/>
        <label>1</label>
    </ligand>
</feature>
<feature type="binding site" evidence="1">
    <location>
        <position position="354"/>
    </location>
    <ligand>
        <name>Mn(2+)</name>
        <dbReference type="ChEBI" id="CHEBI:29035"/>
        <label>1</label>
    </ligand>
</feature>
<feature type="binding site" evidence="1">
    <location>
        <position position="354"/>
    </location>
    <ligand>
        <name>Mn(2+)</name>
        <dbReference type="ChEBI" id="CHEBI:29035"/>
        <label>2</label>
    </ligand>
</feature>
<proteinExistence type="inferred from homology"/>
<organism>
    <name type="scientific">Escherichia coli O45:K1 (strain S88 / ExPEC)</name>
    <dbReference type="NCBI Taxonomy" id="585035"/>
    <lineage>
        <taxon>Bacteria</taxon>
        <taxon>Pseudomonadati</taxon>
        <taxon>Pseudomonadota</taxon>
        <taxon>Gammaproteobacteria</taxon>
        <taxon>Enterobacterales</taxon>
        <taxon>Enterobacteriaceae</taxon>
        <taxon>Escherichia</taxon>
    </lineage>
</organism>
<name>AMPA_ECO45</name>
<evidence type="ECO:0000255" key="1">
    <source>
        <dbReference type="HAMAP-Rule" id="MF_00181"/>
    </source>
</evidence>
<sequence>MEFSVKSGSPEKQRSACIVVGVFEPRRLSPIAEQLDKISDGYISALLRRGELEGKPGQTLLLHHVPNVLSERILLIGCGKERELDERQYKQVIQKTINTLNDTGSMEAVCFLTELHVKGRNNYWKVRQAVETAKETLYSFDQLKTNKSEPRRPLRKMVFNVPTRRELTSGERAIQHGLAIAAGIKAAKDLGNMPPNICNAAYLASQARQLADSYSKNVITRVIGEQQMKELGMHSYLAVGQGSQNESLMSVIEYKGNASEDARPIVLVGKGLTFDSGGISIKPSEGMDEMKYDMCGAAAVYGVMRMVAELQLPINVIGVLAGCENMPGGRAYRPGDVLTTMSGQTVEVLNTDAEGRLVLCDVLTYVERFEPEAVIDVATLTGACVIALGHHITGLMANHNPLAHELIAASEQSGDRAWRLPLGDEYQEQLESNFADMANIGGRPGGAITAGCFLSRFTRKYNWAHLDIAGTAWRSGKAKGATGRPVALLAQFLLNRAGFNGEE</sequence>
<dbReference type="EC" id="3.4.11.1" evidence="1"/>
<dbReference type="EC" id="3.4.11.10" evidence="1"/>
<dbReference type="EMBL" id="CU928161">
    <property type="protein sequence ID" value="CAR05995.1"/>
    <property type="molecule type" value="Genomic_DNA"/>
</dbReference>
<dbReference type="RefSeq" id="WP_000397144.1">
    <property type="nucleotide sequence ID" value="NC_011742.1"/>
</dbReference>
<dbReference type="SMR" id="B7MLR5"/>
<dbReference type="MEROPS" id="M17.003"/>
<dbReference type="GeneID" id="93777558"/>
<dbReference type="KEGG" id="ecz:ECS88_4847"/>
<dbReference type="HOGENOM" id="CLU_013734_2_2_6"/>
<dbReference type="Proteomes" id="UP000000747">
    <property type="component" value="Chromosome"/>
</dbReference>
<dbReference type="GO" id="GO:0005737">
    <property type="term" value="C:cytoplasm"/>
    <property type="evidence" value="ECO:0007669"/>
    <property type="project" value="UniProtKB-SubCell"/>
</dbReference>
<dbReference type="GO" id="GO:0030145">
    <property type="term" value="F:manganese ion binding"/>
    <property type="evidence" value="ECO:0007669"/>
    <property type="project" value="UniProtKB-UniRule"/>
</dbReference>
<dbReference type="GO" id="GO:0070006">
    <property type="term" value="F:metalloaminopeptidase activity"/>
    <property type="evidence" value="ECO:0007669"/>
    <property type="project" value="InterPro"/>
</dbReference>
<dbReference type="GO" id="GO:0006508">
    <property type="term" value="P:proteolysis"/>
    <property type="evidence" value="ECO:0007669"/>
    <property type="project" value="UniProtKB-KW"/>
</dbReference>
<dbReference type="CDD" id="cd00433">
    <property type="entry name" value="Peptidase_M17"/>
    <property type="match status" value="1"/>
</dbReference>
<dbReference type="FunFam" id="3.40.220.10:FF:000001">
    <property type="entry name" value="Probable cytosol aminopeptidase"/>
    <property type="match status" value="1"/>
</dbReference>
<dbReference type="FunFam" id="3.40.630.10:FF:000004">
    <property type="entry name" value="Probable cytosol aminopeptidase"/>
    <property type="match status" value="1"/>
</dbReference>
<dbReference type="Gene3D" id="3.40.220.10">
    <property type="entry name" value="Leucine Aminopeptidase, subunit E, domain 1"/>
    <property type="match status" value="1"/>
</dbReference>
<dbReference type="Gene3D" id="3.40.630.10">
    <property type="entry name" value="Zn peptidases"/>
    <property type="match status" value="1"/>
</dbReference>
<dbReference type="HAMAP" id="MF_00181">
    <property type="entry name" value="Cytosol_peptidase_M17"/>
    <property type="match status" value="1"/>
</dbReference>
<dbReference type="InterPro" id="IPR011356">
    <property type="entry name" value="Leucine_aapep/pepB"/>
</dbReference>
<dbReference type="InterPro" id="IPR043472">
    <property type="entry name" value="Macro_dom-like"/>
</dbReference>
<dbReference type="InterPro" id="IPR000819">
    <property type="entry name" value="Peptidase_M17_C"/>
</dbReference>
<dbReference type="InterPro" id="IPR023042">
    <property type="entry name" value="Peptidase_M17_leu_NH2_pept"/>
</dbReference>
<dbReference type="InterPro" id="IPR008283">
    <property type="entry name" value="Peptidase_M17_N"/>
</dbReference>
<dbReference type="NCBIfam" id="NF002072">
    <property type="entry name" value="PRK00913.1-1"/>
    <property type="match status" value="1"/>
</dbReference>
<dbReference type="NCBIfam" id="NF002073">
    <property type="entry name" value="PRK00913.1-2"/>
    <property type="match status" value="1"/>
</dbReference>
<dbReference type="NCBIfam" id="NF002074">
    <property type="entry name" value="PRK00913.1-4"/>
    <property type="match status" value="1"/>
</dbReference>
<dbReference type="PANTHER" id="PTHR11963:SF23">
    <property type="entry name" value="CYTOSOL AMINOPEPTIDASE"/>
    <property type="match status" value="1"/>
</dbReference>
<dbReference type="PANTHER" id="PTHR11963">
    <property type="entry name" value="LEUCINE AMINOPEPTIDASE-RELATED"/>
    <property type="match status" value="1"/>
</dbReference>
<dbReference type="Pfam" id="PF00883">
    <property type="entry name" value="Peptidase_M17"/>
    <property type="match status" value="1"/>
</dbReference>
<dbReference type="Pfam" id="PF02789">
    <property type="entry name" value="Peptidase_M17_N"/>
    <property type="match status" value="1"/>
</dbReference>
<dbReference type="PRINTS" id="PR00481">
    <property type="entry name" value="LAMNOPPTDASE"/>
</dbReference>
<dbReference type="SUPFAM" id="SSF52949">
    <property type="entry name" value="Macro domain-like"/>
    <property type="match status" value="1"/>
</dbReference>
<dbReference type="SUPFAM" id="SSF53187">
    <property type="entry name" value="Zn-dependent exopeptidases"/>
    <property type="match status" value="1"/>
</dbReference>
<dbReference type="PROSITE" id="PS00631">
    <property type="entry name" value="CYTOSOL_AP"/>
    <property type="match status" value="1"/>
</dbReference>
<gene>
    <name evidence="1" type="primary">pepA</name>
    <name type="ordered locus">ECS88_4847</name>
</gene>
<comment type="function">
    <text evidence="1">Presumably involved in the processing and regular turnover of intracellular proteins. Catalyzes the removal of unsubstituted N-terminal amino acids from various peptides.</text>
</comment>
<comment type="catalytic activity">
    <reaction evidence="1">
        <text>Release of an N-terminal amino acid, Xaa-|-Yaa-, in which Xaa is preferably Leu, but may be other amino acids including Pro although not Arg or Lys, and Yaa may be Pro. Amino acid amides and methyl esters are also readily hydrolyzed, but rates on arylamides are exceedingly low.</text>
        <dbReference type="EC" id="3.4.11.1"/>
    </reaction>
</comment>
<comment type="catalytic activity">
    <reaction evidence="1">
        <text>Release of an N-terminal amino acid, preferentially leucine, but not glutamic or aspartic acids.</text>
        <dbReference type="EC" id="3.4.11.10"/>
    </reaction>
</comment>
<comment type="cofactor">
    <cofactor evidence="1">
        <name>Mn(2+)</name>
        <dbReference type="ChEBI" id="CHEBI:29035"/>
    </cofactor>
    <text evidence="1">Binds 2 manganese ions per subunit.</text>
</comment>
<comment type="subcellular location">
    <subcellularLocation>
        <location evidence="1">Cytoplasm</location>
    </subcellularLocation>
</comment>
<comment type="similarity">
    <text evidence="1">Belongs to the peptidase M17 family.</text>
</comment>